<name>HRCA_BURO0</name>
<evidence type="ECO:0000255" key="1">
    <source>
        <dbReference type="HAMAP-Rule" id="MF_00081"/>
    </source>
</evidence>
<gene>
    <name evidence="1" type="primary">hrcA</name>
    <name type="ordered locus">Bcenmc03_0715</name>
</gene>
<reference key="1">
    <citation type="submission" date="2008-02" db="EMBL/GenBank/DDBJ databases">
        <title>Complete sequence of chromosome 1 of Burkholderia cenocepacia MC0-3.</title>
        <authorList>
            <person name="Copeland A."/>
            <person name="Lucas S."/>
            <person name="Lapidus A."/>
            <person name="Barry K."/>
            <person name="Bruce D."/>
            <person name="Goodwin L."/>
            <person name="Glavina del Rio T."/>
            <person name="Dalin E."/>
            <person name="Tice H."/>
            <person name="Pitluck S."/>
            <person name="Chain P."/>
            <person name="Malfatti S."/>
            <person name="Shin M."/>
            <person name="Vergez L."/>
            <person name="Schmutz J."/>
            <person name="Larimer F."/>
            <person name="Land M."/>
            <person name="Hauser L."/>
            <person name="Kyrpides N."/>
            <person name="Mikhailova N."/>
            <person name="Tiedje J."/>
            <person name="Richardson P."/>
        </authorList>
    </citation>
    <scope>NUCLEOTIDE SEQUENCE [LARGE SCALE GENOMIC DNA]</scope>
    <source>
        <strain>MC0-3</strain>
    </source>
</reference>
<feature type="chain" id="PRO_1000092796" description="Heat-inducible transcription repressor HrcA">
    <location>
        <begin position="1"/>
        <end position="340"/>
    </location>
</feature>
<protein>
    <recommendedName>
        <fullName evidence="1">Heat-inducible transcription repressor HrcA</fullName>
    </recommendedName>
</protein>
<sequence>MLDPRARTLLKTLIERYIADGQPVGSRTLSRYSGLELSPATIRNVMSDLEELGLVSSPHTSAGRVPTPRGYRLFVDTMLTVEAPIDAEAVARQVQNTLQAGEPQQRVVAAAASVLSNLSQFAGVVLTPRRSHVFKQIEFMRLSDKRILLIIVTPEGDVQNRMLATPRDYSPSQLTEASNYINAHFAGLSFDEVRRRLRDEIDQLRGDMTTLMHAAVTASTEVPDTEDTVLISGERNLLEVADLSSDMARLRKLFDVFDQKTGLLQLLDVSSHAQGVQIFIGGESTLVPIEEMSVVTAPYEVNGQIVGTLGVIGPTRMAYNRVIPIVDITARLLSLTLSQQ</sequence>
<proteinExistence type="inferred from homology"/>
<comment type="function">
    <text evidence="1">Negative regulator of class I heat shock genes (grpE-dnaK-dnaJ and groELS operons). Prevents heat-shock induction of these operons.</text>
</comment>
<comment type="similarity">
    <text evidence="1">Belongs to the HrcA family.</text>
</comment>
<accession>B1JW13</accession>
<keyword id="KW-0678">Repressor</keyword>
<keyword id="KW-0346">Stress response</keyword>
<keyword id="KW-0804">Transcription</keyword>
<keyword id="KW-0805">Transcription regulation</keyword>
<dbReference type="EMBL" id="CP000958">
    <property type="protein sequence ID" value="ACA89893.1"/>
    <property type="molecule type" value="Genomic_DNA"/>
</dbReference>
<dbReference type="RefSeq" id="WP_011544637.1">
    <property type="nucleotide sequence ID" value="NC_010508.1"/>
</dbReference>
<dbReference type="SMR" id="B1JW13"/>
<dbReference type="GeneID" id="93143103"/>
<dbReference type="KEGG" id="bcm:Bcenmc03_0715"/>
<dbReference type="HOGENOM" id="CLU_050019_0_0_4"/>
<dbReference type="Proteomes" id="UP000002169">
    <property type="component" value="Chromosome 1"/>
</dbReference>
<dbReference type="GO" id="GO:0003677">
    <property type="term" value="F:DNA binding"/>
    <property type="evidence" value="ECO:0007669"/>
    <property type="project" value="InterPro"/>
</dbReference>
<dbReference type="GO" id="GO:0045892">
    <property type="term" value="P:negative regulation of DNA-templated transcription"/>
    <property type="evidence" value="ECO:0007669"/>
    <property type="project" value="UniProtKB-UniRule"/>
</dbReference>
<dbReference type="Gene3D" id="3.30.450.40">
    <property type="match status" value="1"/>
</dbReference>
<dbReference type="Gene3D" id="3.30.390.60">
    <property type="entry name" value="Heat-inducible transcription repressor hrca homolog, domain 3"/>
    <property type="match status" value="1"/>
</dbReference>
<dbReference type="Gene3D" id="1.10.10.10">
    <property type="entry name" value="Winged helix-like DNA-binding domain superfamily/Winged helix DNA-binding domain"/>
    <property type="match status" value="1"/>
</dbReference>
<dbReference type="HAMAP" id="MF_00081">
    <property type="entry name" value="HrcA"/>
    <property type="match status" value="1"/>
</dbReference>
<dbReference type="InterPro" id="IPR029016">
    <property type="entry name" value="GAF-like_dom_sf"/>
</dbReference>
<dbReference type="InterPro" id="IPR002571">
    <property type="entry name" value="HrcA"/>
</dbReference>
<dbReference type="InterPro" id="IPR021153">
    <property type="entry name" value="HrcA_C"/>
</dbReference>
<dbReference type="InterPro" id="IPR036388">
    <property type="entry name" value="WH-like_DNA-bd_sf"/>
</dbReference>
<dbReference type="InterPro" id="IPR036390">
    <property type="entry name" value="WH_DNA-bd_sf"/>
</dbReference>
<dbReference type="InterPro" id="IPR005104">
    <property type="entry name" value="WHTH_HrcA_DNA-bd"/>
</dbReference>
<dbReference type="InterPro" id="IPR023120">
    <property type="entry name" value="WHTH_transcript_rep_HrcA_IDD"/>
</dbReference>
<dbReference type="NCBIfam" id="TIGR00331">
    <property type="entry name" value="hrcA"/>
    <property type="match status" value="1"/>
</dbReference>
<dbReference type="PANTHER" id="PTHR34824">
    <property type="entry name" value="HEAT-INDUCIBLE TRANSCRIPTION REPRESSOR HRCA"/>
    <property type="match status" value="1"/>
</dbReference>
<dbReference type="PANTHER" id="PTHR34824:SF1">
    <property type="entry name" value="HEAT-INDUCIBLE TRANSCRIPTION REPRESSOR HRCA"/>
    <property type="match status" value="1"/>
</dbReference>
<dbReference type="Pfam" id="PF01628">
    <property type="entry name" value="HrcA"/>
    <property type="match status" value="1"/>
</dbReference>
<dbReference type="Pfam" id="PF03444">
    <property type="entry name" value="HrcA_DNA-bdg"/>
    <property type="match status" value="1"/>
</dbReference>
<dbReference type="PIRSF" id="PIRSF005485">
    <property type="entry name" value="HrcA"/>
    <property type="match status" value="1"/>
</dbReference>
<dbReference type="SUPFAM" id="SSF55781">
    <property type="entry name" value="GAF domain-like"/>
    <property type="match status" value="1"/>
</dbReference>
<dbReference type="SUPFAM" id="SSF46785">
    <property type="entry name" value="Winged helix' DNA-binding domain"/>
    <property type="match status" value="1"/>
</dbReference>
<organism>
    <name type="scientific">Burkholderia orbicola (strain MC0-3)</name>
    <dbReference type="NCBI Taxonomy" id="406425"/>
    <lineage>
        <taxon>Bacteria</taxon>
        <taxon>Pseudomonadati</taxon>
        <taxon>Pseudomonadota</taxon>
        <taxon>Betaproteobacteria</taxon>
        <taxon>Burkholderiales</taxon>
        <taxon>Burkholderiaceae</taxon>
        <taxon>Burkholderia</taxon>
        <taxon>Burkholderia cepacia complex</taxon>
        <taxon>Burkholderia orbicola</taxon>
    </lineage>
</organism>